<gene>
    <name type="ORF">DDB_G0280787</name>
</gene>
<protein>
    <recommendedName>
        <fullName>UPF0746 protein DDB_G0280787</fullName>
    </recommendedName>
</protein>
<name>Y0787_DICDI</name>
<feature type="chain" id="PRO_0000377736" description="UPF0746 protein DDB_G0280787">
    <location>
        <begin position="1"/>
        <end position="936"/>
    </location>
</feature>
<feature type="domain" description="SAP" evidence="1">
    <location>
        <begin position="44"/>
        <end position="78"/>
    </location>
</feature>
<feature type="region of interest" description="Disordered" evidence="2">
    <location>
        <begin position="1"/>
        <end position="30"/>
    </location>
</feature>
<feature type="region of interest" description="Disordered" evidence="2">
    <location>
        <begin position="91"/>
        <end position="110"/>
    </location>
</feature>
<feature type="compositionally biased region" description="Basic and acidic residues" evidence="2">
    <location>
        <begin position="1"/>
        <end position="19"/>
    </location>
</feature>
<organism>
    <name type="scientific">Dictyostelium discoideum</name>
    <name type="common">Social amoeba</name>
    <dbReference type="NCBI Taxonomy" id="44689"/>
    <lineage>
        <taxon>Eukaryota</taxon>
        <taxon>Amoebozoa</taxon>
        <taxon>Evosea</taxon>
        <taxon>Eumycetozoa</taxon>
        <taxon>Dictyostelia</taxon>
        <taxon>Dictyosteliales</taxon>
        <taxon>Dictyosteliaceae</taxon>
        <taxon>Dictyostelium</taxon>
    </lineage>
</organism>
<reference key="1">
    <citation type="journal article" date="2005" name="Nature">
        <title>The genome of the social amoeba Dictyostelium discoideum.</title>
        <authorList>
            <person name="Eichinger L."/>
            <person name="Pachebat J.A."/>
            <person name="Gloeckner G."/>
            <person name="Rajandream M.A."/>
            <person name="Sucgang R."/>
            <person name="Berriman M."/>
            <person name="Song J."/>
            <person name="Olsen R."/>
            <person name="Szafranski K."/>
            <person name="Xu Q."/>
            <person name="Tunggal B."/>
            <person name="Kummerfeld S."/>
            <person name="Madera M."/>
            <person name="Konfortov B.A."/>
            <person name="Rivero F."/>
            <person name="Bankier A.T."/>
            <person name="Lehmann R."/>
            <person name="Hamlin N."/>
            <person name="Davies R."/>
            <person name="Gaudet P."/>
            <person name="Fey P."/>
            <person name="Pilcher K."/>
            <person name="Chen G."/>
            <person name="Saunders D."/>
            <person name="Sodergren E.J."/>
            <person name="Davis P."/>
            <person name="Kerhornou A."/>
            <person name="Nie X."/>
            <person name="Hall N."/>
            <person name="Anjard C."/>
            <person name="Hemphill L."/>
            <person name="Bason N."/>
            <person name="Farbrother P."/>
            <person name="Desany B."/>
            <person name="Just E."/>
            <person name="Morio T."/>
            <person name="Rost R."/>
            <person name="Churcher C.M."/>
            <person name="Cooper J."/>
            <person name="Haydock S."/>
            <person name="van Driessche N."/>
            <person name="Cronin A."/>
            <person name="Goodhead I."/>
            <person name="Muzny D.M."/>
            <person name="Mourier T."/>
            <person name="Pain A."/>
            <person name="Lu M."/>
            <person name="Harper D."/>
            <person name="Lindsay R."/>
            <person name="Hauser H."/>
            <person name="James K.D."/>
            <person name="Quiles M."/>
            <person name="Madan Babu M."/>
            <person name="Saito T."/>
            <person name="Buchrieser C."/>
            <person name="Wardroper A."/>
            <person name="Felder M."/>
            <person name="Thangavelu M."/>
            <person name="Johnson D."/>
            <person name="Knights A."/>
            <person name="Loulseged H."/>
            <person name="Mungall K.L."/>
            <person name="Oliver K."/>
            <person name="Price C."/>
            <person name="Quail M.A."/>
            <person name="Urushihara H."/>
            <person name="Hernandez J."/>
            <person name="Rabbinowitsch E."/>
            <person name="Steffen D."/>
            <person name="Sanders M."/>
            <person name="Ma J."/>
            <person name="Kohara Y."/>
            <person name="Sharp S."/>
            <person name="Simmonds M.N."/>
            <person name="Spiegler S."/>
            <person name="Tivey A."/>
            <person name="Sugano S."/>
            <person name="White B."/>
            <person name="Walker D."/>
            <person name="Woodward J.R."/>
            <person name="Winckler T."/>
            <person name="Tanaka Y."/>
            <person name="Shaulsky G."/>
            <person name="Schleicher M."/>
            <person name="Weinstock G.M."/>
            <person name="Rosenthal A."/>
            <person name="Cox E.C."/>
            <person name="Chisholm R.L."/>
            <person name="Gibbs R.A."/>
            <person name="Loomis W.F."/>
            <person name="Platzer M."/>
            <person name="Kay R.R."/>
            <person name="Williams J.G."/>
            <person name="Dear P.H."/>
            <person name="Noegel A.A."/>
            <person name="Barrell B.G."/>
            <person name="Kuspa A."/>
        </authorList>
    </citation>
    <scope>NUCLEOTIDE SEQUENCE [LARGE SCALE GENOMIC DNA]</scope>
    <source>
        <strain>AX4</strain>
    </source>
</reference>
<proteinExistence type="inferred from homology"/>
<dbReference type="EMBL" id="AAFI02000038">
    <property type="protein sequence ID" value="EAL67051.1"/>
    <property type="molecule type" value="Genomic_DNA"/>
</dbReference>
<dbReference type="RefSeq" id="XP_641028.1">
    <property type="nucleotide sequence ID" value="XM_635936.1"/>
</dbReference>
<dbReference type="SMR" id="Q54UV9"/>
<dbReference type="FunCoup" id="Q54UV9">
    <property type="interactions" value="9"/>
</dbReference>
<dbReference type="PaxDb" id="44689-DDB0220673"/>
<dbReference type="EnsemblProtists" id="EAL67051">
    <property type="protein sequence ID" value="EAL67051"/>
    <property type="gene ID" value="DDB_G0280787"/>
</dbReference>
<dbReference type="GeneID" id="8622730"/>
<dbReference type="KEGG" id="ddi:DDB_G0280787"/>
<dbReference type="dictyBase" id="DDB_G0280787"/>
<dbReference type="VEuPathDB" id="AmoebaDB:DDB_G0280787"/>
<dbReference type="eggNOG" id="ENOG502RSNK">
    <property type="taxonomic scope" value="Eukaryota"/>
</dbReference>
<dbReference type="HOGENOM" id="CLU_283779_0_0_1"/>
<dbReference type="InParanoid" id="Q54UV9"/>
<dbReference type="OMA" id="WNIWIES"/>
<dbReference type="PhylomeDB" id="Q54UV9"/>
<dbReference type="PRO" id="PR:Q54UV9"/>
<dbReference type="Proteomes" id="UP000002195">
    <property type="component" value="Chromosome 3"/>
</dbReference>
<dbReference type="GO" id="GO:0003677">
    <property type="term" value="F:DNA binding"/>
    <property type="evidence" value="ECO:0007669"/>
    <property type="project" value="UniProtKB-KW"/>
</dbReference>
<dbReference type="InterPro" id="IPR003034">
    <property type="entry name" value="SAP_dom"/>
</dbReference>
<dbReference type="InterPro" id="IPR051904">
    <property type="entry name" value="UPF0746_actin_org"/>
</dbReference>
<dbReference type="PANTHER" id="PTHR32488">
    <property type="entry name" value="UPF0746 PROTEIN DDB_G0280785-RELATED"/>
    <property type="match status" value="1"/>
</dbReference>
<dbReference type="PANTHER" id="PTHR32488:SF86">
    <property type="entry name" value="UPF0746 PROTEIN DDB_G0280785-RELATED"/>
    <property type="match status" value="1"/>
</dbReference>
<dbReference type="PROSITE" id="PS50800">
    <property type="entry name" value="SAP"/>
    <property type="match status" value="1"/>
</dbReference>
<comment type="similarity">
    <text evidence="3">Belongs to the UPF0746 family.</text>
</comment>
<accession>Q54UV9</accession>
<keyword id="KW-0238">DNA-binding</keyword>
<keyword id="KW-1185">Reference proteome</keyword>
<sequence>MISNKRKEIDTIDGHHEKDNDDDDSDGIDNGLLTYKKFKKDFDSGSTNYRELQIIAKSLGLASNGKKQLVYNRIEGYFLSKKVKNNLTNNETNQQEEKKEEEQQQPQPQEKQYILTFKDVEPVENYFWKVFRNIVIFKHIFSNFKNKQYGYYDLIGCDRSYLNDTSNSMEIIIDNIKSNNNHQIIRNKINIANIIHKFKKNDEKTKSFYNLLFSRYSSTSTSSTIQFDENIDKWIQAMIGHVNFTALDQFIKFFKIDSEVIKKVMKIHIDPSVFGNTTYDKLKIYNYLKSINSLPTSHTLLPFISTDLSKFLSFDNKFKKLIKSYKRLIESTNLQERMEQQKQKEKIKIHPSNIKYYEKLNQIILELNEIQTSQFTNDQLNSTIKNLLNHTTPTSTSTSTPNLTITSTASNNINLKEIIKKYYKSICLFFYCTVNSATEMFFRKPLLYYLNFKKESVDKMYERVVNKWNGRSFDHQLFFQSILKDINIEKNEKFELISNVLDNKYVKTFKEYDHYIFFKAVFSSNDIELIDYFLKILMQQPNKIQKITRYPNIGKLIGNYCNLIDKKEILDFYFQNYRDESLLFDDQNEIWKQIQLELIEHYEYLMDSIGKRCKLDFTPWFDQNFLDRLNRAILKPSVYSIGFDGYFDIVFEGLVDLNIKDNKENSIINFLSNAQLKHPLDLKFFESSFNPYKGKMLTFIKFLFNNISKESIETKLKVINLKTDNKNFEEIKSKIELTTTLTATTTTTTANLLSPKKSKDVGCLTIGKTESFNFTISIRMLLVCLYNLDRVDDIIYLFDKLPEVLFNPDYFSIFTNEYCIYGISSSYYLELFINYFIENLNNNTINYLYNCLCIASKKGYTQIFKNIISSDQNSKYLLKIQTKSNQSSLFDSKLLNDIVVKSINSSNFELSNLLIDFIDFSAKDKNSLKMKILKSK</sequence>
<evidence type="ECO:0000255" key="1">
    <source>
        <dbReference type="PROSITE-ProRule" id="PRU00186"/>
    </source>
</evidence>
<evidence type="ECO:0000256" key="2">
    <source>
        <dbReference type="SAM" id="MobiDB-lite"/>
    </source>
</evidence>
<evidence type="ECO:0000305" key="3"/>